<dbReference type="EC" id="2.7.2.3" evidence="1"/>
<dbReference type="EMBL" id="CP001127">
    <property type="protein sequence ID" value="ACF92034.1"/>
    <property type="molecule type" value="Genomic_DNA"/>
</dbReference>
<dbReference type="RefSeq" id="WP_000111274.1">
    <property type="nucleotide sequence ID" value="NC_011094.1"/>
</dbReference>
<dbReference type="SMR" id="B4TV38"/>
<dbReference type="KEGG" id="sew:SeSA_A3242"/>
<dbReference type="HOGENOM" id="CLU_025427_0_2_6"/>
<dbReference type="UniPathway" id="UPA00109">
    <property type="reaction ID" value="UER00185"/>
</dbReference>
<dbReference type="Proteomes" id="UP000001865">
    <property type="component" value="Chromosome"/>
</dbReference>
<dbReference type="GO" id="GO:0005829">
    <property type="term" value="C:cytosol"/>
    <property type="evidence" value="ECO:0007669"/>
    <property type="project" value="TreeGrafter"/>
</dbReference>
<dbReference type="GO" id="GO:0043531">
    <property type="term" value="F:ADP binding"/>
    <property type="evidence" value="ECO:0007669"/>
    <property type="project" value="TreeGrafter"/>
</dbReference>
<dbReference type="GO" id="GO:0005524">
    <property type="term" value="F:ATP binding"/>
    <property type="evidence" value="ECO:0007669"/>
    <property type="project" value="UniProtKB-KW"/>
</dbReference>
<dbReference type="GO" id="GO:0004618">
    <property type="term" value="F:phosphoglycerate kinase activity"/>
    <property type="evidence" value="ECO:0007669"/>
    <property type="project" value="UniProtKB-UniRule"/>
</dbReference>
<dbReference type="GO" id="GO:0006094">
    <property type="term" value="P:gluconeogenesis"/>
    <property type="evidence" value="ECO:0007669"/>
    <property type="project" value="TreeGrafter"/>
</dbReference>
<dbReference type="GO" id="GO:0006096">
    <property type="term" value="P:glycolytic process"/>
    <property type="evidence" value="ECO:0007669"/>
    <property type="project" value="UniProtKB-UniRule"/>
</dbReference>
<dbReference type="FunFam" id="3.40.50.1260:FF:000001">
    <property type="entry name" value="Phosphoglycerate kinase"/>
    <property type="match status" value="1"/>
</dbReference>
<dbReference type="FunFam" id="3.40.50.1260:FF:000002">
    <property type="entry name" value="Phosphoglycerate kinase"/>
    <property type="match status" value="1"/>
</dbReference>
<dbReference type="Gene3D" id="3.40.50.1260">
    <property type="entry name" value="Phosphoglycerate kinase, N-terminal domain"/>
    <property type="match status" value="2"/>
</dbReference>
<dbReference type="HAMAP" id="MF_00145">
    <property type="entry name" value="Phosphoglyc_kinase"/>
    <property type="match status" value="1"/>
</dbReference>
<dbReference type="InterPro" id="IPR001576">
    <property type="entry name" value="Phosphoglycerate_kinase"/>
</dbReference>
<dbReference type="InterPro" id="IPR015911">
    <property type="entry name" value="Phosphoglycerate_kinase_CS"/>
</dbReference>
<dbReference type="InterPro" id="IPR015824">
    <property type="entry name" value="Phosphoglycerate_kinase_N"/>
</dbReference>
<dbReference type="InterPro" id="IPR036043">
    <property type="entry name" value="Phosphoglycerate_kinase_sf"/>
</dbReference>
<dbReference type="PANTHER" id="PTHR11406">
    <property type="entry name" value="PHOSPHOGLYCERATE KINASE"/>
    <property type="match status" value="1"/>
</dbReference>
<dbReference type="PANTHER" id="PTHR11406:SF23">
    <property type="entry name" value="PHOSPHOGLYCERATE KINASE 1, CHLOROPLASTIC-RELATED"/>
    <property type="match status" value="1"/>
</dbReference>
<dbReference type="Pfam" id="PF00162">
    <property type="entry name" value="PGK"/>
    <property type="match status" value="1"/>
</dbReference>
<dbReference type="PIRSF" id="PIRSF000724">
    <property type="entry name" value="Pgk"/>
    <property type="match status" value="1"/>
</dbReference>
<dbReference type="PRINTS" id="PR00477">
    <property type="entry name" value="PHGLYCKINASE"/>
</dbReference>
<dbReference type="SUPFAM" id="SSF53748">
    <property type="entry name" value="Phosphoglycerate kinase"/>
    <property type="match status" value="1"/>
</dbReference>
<dbReference type="PROSITE" id="PS00111">
    <property type="entry name" value="PGLYCERATE_KINASE"/>
    <property type="match status" value="1"/>
</dbReference>
<proteinExistence type="inferred from homology"/>
<accession>B4TV38</accession>
<comment type="catalytic activity">
    <reaction evidence="1">
        <text>(2R)-3-phosphoglycerate + ATP = (2R)-3-phospho-glyceroyl phosphate + ADP</text>
        <dbReference type="Rhea" id="RHEA:14801"/>
        <dbReference type="ChEBI" id="CHEBI:30616"/>
        <dbReference type="ChEBI" id="CHEBI:57604"/>
        <dbReference type="ChEBI" id="CHEBI:58272"/>
        <dbReference type="ChEBI" id="CHEBI:456216"/>
        <dbReference type="EC" id="2.7.2.3"/>
    </reaction>
</comment>
<comment type="pathway">
    <text evidence="1">Carbohydrate degradation; glycolysis; pyruvate from D-glyceraldehyde 3-phosphate: step 2/5.</text>
</comment>
<comment type="subunit">
    <text evidence="1">Monomer.</text>
</comment>
<comment type="subcellular location">
    <subcellularLocation>
        <location evidence="1">Cytoplasm</location>
    </subcellularLocation>
</comment>
<comment type="similarity">
    <text evidence="1">Belongs to the phosphoglycerate kinase family.</text>
</comment>
<feature type="chain" id="PRO_1000096376" description="Phosphoglycerate kinase">
    <location>
        <begin position="1"/>
        <end position="387"/>
    </location>
</feature>
<feature type="binding site" evidence="1">
    <location>
        <begin position="21"/>
        <end position="23"/>
    </location>
    <ligand>
        <name>substrate</name>
    </ligand>
</feature>
<feature type="binding site" evidence="1">
    <location>
        <position position="36"/>
    </location>
    <ligand>
        <name>substrate</name>
    </ligand>
</feature>
<feature type="binding site" evidence="1">
    <location>
        <begin position="59"/>
        <end position="62"/>
    </location>
    <ligand>
        <name>substrate</name>
    </ligand>
</feature>
<feature type="binding site" evidence="1">
    <location>
        <position position="113"/>
    </location>
    <ligand>
        <name>substrate</name>
    </ligand>
</feature>
<feature type="binding site" evidence="1">
    <location>
        <position position="146"/>
    </location>
    <ligand>
        <name>substrate</name>
    </ligand>
</feature>
<feature type="binding site" evidence="1">
    <location>
        <position position="197"/>
    </location>
    <ligand>
        <name>ATP</name>
        <dbReference type="ChEBI" id="CHEBI:30616"/>
    </ligand>
</feature>
<feature type="binding site" evidence="1">
    <location>
        <position position="314"/>
    </location>
    <ligand>
        <name>ATP</name>
        <dbReference type="ChEBI" id="CHEBI:30616"/>
    </ligand>
</feature>
<feature type="binding site" evidence="1">
    <location>
        <begin position="340"/>
        <end position="343"/>
    </location>
    <ligand>
        <name>ATP</name>
        <dbReference type="ChEBI" id="CHEBI:30616"/>
    </ligand>
</feature>
<keyword id="KW-0067">ATP-binding</keyword>
<keyword id="KW-0963">Cytoplasm</keyword>
<keyword id="KW-0324">Glycolysis</keyword>
<keyword id="KW-0418">Kinase</keyword>
<keyword id="KW-0547">Nucleotide-binding</keyword>
<keyword id="KW-0808">Transferase</keyword>
<sequence>MSVIKMTDLDLAGKRVFIRADLNVPVKEGKVTSDARIRASLPTIELALKQGAKVMVTSHLGRPTEGEYNEEFSLLPVVNYLKDKLSNPVRLVKDYLDGVDVAEGELVVLENVRFNKGEKKDDEALSKKYAALCDVFVMDAFGTAHRAQASTHGIGKFADVACAGPLLAAELDALGKALKEPARPMVAIVGGSKVSTKLTVLDSLSKIADQLIVGGGIANTFVAAQGHSVGKSLYEADLVDEAKRLLTTCDIPVPTDVRVATEFSETAPATLKSVNDVKEDEQILDIGDASAQQLAEILKNAKTILWNGPVGVFEFPNFRKGTEIVANAIADSEAFSIAGGGDTLAAIDLFGIADKISYISTGGGAFLEFVEGKVLPAVAMLEERAKK</sequence>
<name>PGK_SALSV</name>
<protein>
    <recommendedName>
        <fullName evidence="1">Phosphoglycerate kinase</fullName>
        <ecNumber evidence="1">2.7.2.3</ecNumber>
    </recommendedName>
</protein>
<reference key="1">
    <citation type="journal article" date="2011" name="J. Bacteriol.">
        <title>Comparative genomics of 28 Salmonella enterica isolates: evidence for CRISPR-mediated adaptive sublineage evolution.</title>
        <authorList>
            <person name="Fricke W.F."/>
            <person name="Mammel M.K."/>
            <person name="McDermott P.F."/>
            <person name="Tartera C."/>
            <person name="White D.G."/>
            <person name="Leclerc J.E."/>
            <person name="Ravel J."/>
            <person name="Cebula T.A."/>
        </authorList>
    </citation>
    <scope>NUCLEOTIDE SEQUENCE [LARGE SCALE GENOMIC DNA]</scope>
    <source>
        <strain>CVM19633</strain>
    </source>
</reference>
<evidence type="ECO:0000255" key="1">
    <source>
        <dbReference type="HAMAP-Rule" id="MF_00145"/>
    </source>
</evidence>
<organism>
    <name type="scientific">Salmonella schwarzengrund (strain CVM19633)</name>
    <dbReference type="NCBI Taxonomy" id="439843"/>
    <lineage>
        <taxon>Bacteria</taxon>
        <taxon>Pseudomonadati</taxon>
        <taxon>Pseudomonadota</taxon>
        <taxon>Gammaproteobacteria</taxon>
        <taxon>Enterobacterales</taxon>
        <taxon>Enterobacteriaceae</taxon>
        <taxon>Salmonella</taxon>
    </lineage>
</organism>
<gene>
    <name evidence="1" type="primary">pgk</name>
    <name type="ordered locus">SeSA_A3242</name>
</gene>